<evidence type="ECO:0000255" key="1">
    <source>
        <dbReference type="HAMAP-Rule" id="MF_00017"/>
    </source>
</evidence>
<keyword id="KW-0227">DNA damage</keyword>
<keyword id="KW-0233">DNA recombination</keyword>
<keyword id="KW-0234">DNA repair</keyword>
<keyword id="KW-0479">Metal-binding</keyword>
<keyword id="KW-0862">Zinc</keyword>
<keyword id="KW-0863">Zinc-finger</keyword>
<organism>
    <name type="scientific">Pseudomonas putida (strain ATCC 700007 / DSM 6899 / JCM 31910 / BCRC 17059 / LMG 24140 / F1)</name>
    <dbReference type="NCBI Taxonomy" id="351746"/>
    <lineage>
        <taxon>Bacteria</taxon>
        <taxon>Pseudomonadati</taxon>
        <taxon>Pseudomonadota</taxon>
        <taxon>Gammaproteobacteria</taxon>
        <taxon>Pseudomonadales</taxon>
        <taxon>Pseudomonadaceae</taxon>
        <taxon>Pseudomonas</taxon>
    </lineage>
</organism>
<comment type="function">
    <text evidence="1">May play a role in DNA repair. It seems to be involved in an RecBC-independent recombinational process of DNA repair. It may act with RecF and RecO.</text>
</comment>
<comment type="similarity">
    <text evidence="1">Belongs to the RecR family.</text>
</comment>
<feature type="chain" id="PRO_1000001587" description="Recombination protein RecR">
    <location>
        <begin position="1"/>
        <end position="200"/>
    </location>
</feature>
<feature type="domain" description="Toprim" evidence="1">
    <location>
        <begin position="80"/>
        <end position="175"/>
    </location>
</feature>
<feature type="zinc finger region" description="C4-type" evidence="1">
    <location>
        <begin position="57"/>
        <end position="72"/>
    </location>
</feature>
<dbReference type="EMBL" id="CP000712">
    <property type="protein sequence ID" value="ABQ77757.1"/>
    <property type="molecule type" value="Genomic_DNA"/>
</dbReference>
<dbReference type="SMR" id="A5W0U7"/>
<dbReference type="KEGG" id="ppf:Pput_1601"/>
<dbReference type="eggNOG" id="COG0353">
    <property type="taxonomic scope" value="Bacteria"/>
</dbReference>
<dbReference type="HOGENOM" id="CLU_060739_1_2_6"/>
<dbReference type="GO" id="GO:0003677">
    <property type="term" value="F:DNA binding"/>
    <property type="evidence" value="ECO:0007669"/>
    <property type="project" value="UniProtKB-UniRule"/>
</dbReference>
<dbReference type="GO" id="GO:0008270">
    <property type="term" value="F:zinc ion binding"/>
    <property type="evidence" value="ECO:0007669"/>
    <property type="project" value="UniProtKB-KW"/>
</dbReference>
<dbReference type="GO" id="GO:0006310">
    <property type="term" value="P:DNA recombination"/>
    <property type="evidence" value="ECO:0007669"/>
    <property type="project" value="UniProtKB-UniRule"/>
</dbReference>
<dbReference type="GO" id="GO:0006281">
    <property type="term" value="P:DNA repair"/>
    <property type="evidence" value="ECO:0007669"/>
    <property type="project" value="UniProtKB-UniRule"/>
</dbReference>
<dbReference type="CDD" id="cd01025">
    <property type="entry name" value="TOPRIM_recR"/>
    <property type="match status" value="1"/>
</dbReference>
<dbReference type="FunFam" id="3.40.1360.10:FF:000001">
    <property type="entry name" value="Recombination protein RecR"/>
    <property type="match status" value="1"/>
</dbReference>
<dbReference type="Gene3D" id="3.40.1360.10">
    <property type="match status" value="1"/>
</dbReference>
<dbReference type="Gene3D" id="6.10.250.240">
    <property type="match status" value="1"/>
</dbReference>
<dbReference type="Gene3D" id="1.10.8.420">
    <property type="entry name" value="RecR Domain 1"/>
    <property type="match status" value="1"/>
</dbReference>
<dbReference type="HAMAP" id="MF_00017">
    <property type="entry name" value="RecR"/>
    <property type="match status" value="1"/>
</dbReference>
<dbReference type="InterPro" id="IPR000093">
    <property type="entry name" value="DNA_Rcmb_RecR"/>
</dbReference>
<dbReference type="InterPro" id="IPR023627">
    <property type="entry name" value="Rcmb_RecR"/>
</dbReference>
<dbReference type="InterPro" id="IPR015967">
    <property type="entry name" value="Rcmb_RecR_Znf"/>
</dbReference>
<dbReference type="InterPro" id="IPR006171">
    <property type="entry name" value="TOPRIM_dom"/>
</dbReference>
<dbReference type="InterPro" id="IPR034137">
    <property type="entry name" value="TOPRIM_RecR"/>
</dbReference>
<dbReference type="NCBIfam" id="TIGR00615">
    <property type="entry name" value="recR"/>
    <property type="match status" value="1"/>
</dbReference>
<dbReference type="PANTHER" id="PTHR30446">
    <property type="entry name" value="RECOMBINATION PROTEIN RECR"/>
    <property type="match status" value="1"/>
</dbReference>
<dbReference type="PANTHER" id="PTHR30446:SF0">
    <property type="entry name" value="RECOMBINATION PROTEIN RECR"/>
    <property type="match status" value="1"/>
</dbReference>
<dbReference type="Pfam" id="PF21175">
    <property type="entry name" value="RecR_C"/>
    <property type="match status" value="1"/>
</dbReference>
<dbReference type="Pfam" id="PF21176">
    <property type="entry name" value="RecR_HhH"/>
    <property type="match status" value="1"/>
</dbReference>
<dbReference type="Pfam" id="PF02132">
    <property type="entry name" value="RecR_ZnF"/>
    <property type="match status" value="1"/>
</dbReference>
<dbReference type="Pfam" id="PF13662">
    <property type="entry name" value="Toprim_4"/>
    <property type="match status" value="1"/>
</dbReference>
<dbReference type="SMART" id="SM00493">
    <property type="entry name" value="TOPRIM"/>
    <property type="match status" value="1"/>
</dbReference>
<dbReference type="SUPFAM" id="SSF111304">
    <property type="entry name" value="Recombination protein RecR"/>
    <property type="match status" value="1"/>
</dbReference>
<dbReference type="PROSITE" id="PS01300">
    <property type="entry name" value="RECR"/>
    <property type="match status" value="1"/>
</dbReference>
<dbReference type="PROSITE" id="PS50880">
    <property type="entry name" value="TOPRIM"/>
    <property type="match status" value="1"/>
</dbReference>
<gene>
    <name evidence="1" type="primary">recR</name>
    <name type="ordered locus">Pput_1601</name>
</gene>
<accession>A5W0U7</accession>
<sequence length="200" mass="21613">MSFSPLIRQLIDGLRILPGVGQKTAQRMALQLLERDRSGGLRLAQALTQAMEGVGHCRQCRTLTEQELCPQCADPRRDDTQLCVVEGPTDVYAVEQTGYRGRYFVLKGHLSPLDGLGPEAIGIPQLMARIEEQGTFTEVILATNPTVEGEATAHYIAQLLSEKGLVASRIAHGVPLGGELEMVDGGTLAHAFAGRRPISL</sequence>
<reference key="1">
    <citation type="submission" date="2007-05" db="EMBL/GenBank/DDBJ databases">
        <title>Complete sequence of Pseudomonas putida F1.</title>
        <authorList>
            <consortium name="US DOE Joint Genome Institute"/>
            <person name="Copeland A."/>
            <person name="Lucas S."/>
            <person name="Lapidus A."/>
            <person name="Barry K."/>
            <person name="Detter J.C."/>
            <person name="Glavina del Rio T."/>
            <person name="Hammon N."/>
            <person name="Israni S."/>
            <person name="Dalin E."/>
            <person name="Tice H."/>
            <person name="Pitluck S."/>
            <person name="Chain P."/>
            <person name="Malfatti S."/>
            <person name="Shin M."/>
            <person name="Vergez L."/>
            <person name="Schmutz J."/>
            <person name="Larimer F."/>
            <person name="Land M."/>
            <person name="Hauser L."/>
            <person name="Kyrpides N."/>
            <person name="Lykidis A."/>
            <person name="Parales R."/>
            <person name="Richardson P."/>
        </authorList>
    </citation>
    <scope>NUCLEOTIDE SEQUENCE [LARGE SCALE GENOMIC DNA]</scope>
    <source>
        <strain>ATCC 700007 / DSM 6899 / JCM 31910 / BCRC 17059 / LMG 24140 / F1</strain>
    </source>
</reference>
<proteinExistence type="inferred from homology"/>
<name>RECR_PSEP1</name>
<protein>
    <recommendedName>
        <fullName evidence="1">Recombination protein RecR</fullName>
    </recommendedName>
</protein>